<feature type="peptide" id="PRO_0000441354" description="Cyclotide mden-E" evidence="2">
    <location>
        <begin position="1"/>
        <end position="30"/>
    </location>
</feature>
<feature type="disulfide bond" evidence="1">
    <location>
        <begin position="4"/>
        <end position="20"/>
    </location>
</feature>
<feature type="disulfide bond" evidence="1">
    <location>
        <begin position="8"/>
        <end position="22"/>
    </location>
</feature>
<feature type="disulfide bond" evidence="1">
    <location>
        <begin position="13"/>
        <end position="27"/>
    </location>
</feature>
<feature type="cross-link" description="Cyclopeptide (Gly-Asn)" evidence="3">
    <location>
        <begin position="1"/>
        <end position="30"/>
    </location>
</feature>
<keyword id="KW-0903">Direct protein sequencing</keyword>
<keyword id="KW-1015">Disulfide bond</keyword>
<keyword id="KW-0611">Plant defense</keyword>
<organism evidence="3">
    <name type="scientific">Melicytus dentatus</name>
    <name type="common">Tree violet</name>
    <dbReference type="NCBI Taxonomy" id="491106"/>
    <lineage>
        <taxon>Eukaryota</taxon>
        <taxon>Viridiplantae</taxon>
        <taxon>Streptophyta</taxon>
        <taxon>Embryophyta</taxon>
        <taxon>Tracheophyta</taxon>
        <taxon>Spermatophyta</taxon>
        <taxon>Magnoliopsida</taxon>
        <taxon>eudicotyledons</taxon>
        <taxon>Gunneridae</taxon>
        <taxon>Pentapetalae</taxon>
        <taxon>rosids</taxon>
        <taxon>fabids</taxon>
        <taxon>Malpighiales</taxon>
        <taxon>Violaceae</taxon>
        <taxon>Melicytus</taxon>
    </lineage>
</organism>
<name>CYMEE_MELDN</name>
<reference evidence="4" key="1">
    <citation type="journal article" date="2017" name="J. Nat. Prod.">
        <title>Understanding the Diversity and Distribution of Cyclotides from Plants of Varied Genetic Origin.</title>
        <authorList>
            <person name="Ravipati A.S."/>
            <person name="Poth A.G."/>
            <person name="Troeira Henriques S."/>
            <person name="Bhandari M."/>
            <person name="Huang Y.H."/>
            <person name="Nino J."/>
            <person name="Colgrave M.L."/>
            <person name="Craik D.J."/>
        </authorList>
    </citation>
    <scope>PROTEIN SEQUENCE</scope>
</reference>
<accession>C0HKI7</accession>
<evidence type="ECO:0000255" key="1">
    <source>
        <dbReference type="PROSITE-ProRule" id="PRU00395"/>
    </source>
</evidence>
<evidence type="ECO:0000269" key="2">
    <source>
    </source>
</evidence>
<evidence type="ECO:0000303" key="3">
    <source>
    </source>
</evidence>
<evidence type="ECO:0000305" key="4"/>
<sequence>GIPCGESCVYIPCITAAIGCSCKSKVCYRN</sequence>
<protein>
    <recommendedName>
        <fullName evidence="3">Cyclotide mden-E</fullName>
    </recommendedName>
</protein>
<proteinExistence type="evidence at protein level"/>
<comment type="function">
    <text evidence="1">Probably participates in a plant defense mechanism.</text>
</comment>
<comment type="domain">
    <text evidence="4">The presence of a 'disulfide through disulfide knot' structurally defines this protein as a knottin.</text>
</comment>
<comment type="PTM">
    <text evidence="1">This is a cyclic peptide.</text>
</comment>
<comment type="similarity">
    <text evidence="1">Belongs to the cyclotide family. Bracelet subfamily.</text>
</comment>
<comment type="caution">
    <text evidence="1">This peptide is cyclic. The start position was chosen by similarity to Oak1 (kalata B1) for which the DNA sequence is known.</text>
</comment>
<dbReference type="SMR" id="C0HKI7"/>
<dbReference type="GO" id="GO:0006952">
    <property type="term" value="P:defense response"/>
    <property type="evidence" value="ECO:0007669"/>
    <property type="project" value="UniProtKB-KW"/>
</dbReference>
<dbReference type="InterPro" id="IPR005535">
    <property type="entry name" value="Cyclotide"/>
</dbReference>
<dbReference type="InterPro" id="IPR012323">
    <property type="entry name" value="Cyclotide_bracelet_CS"/>
</dbReference>
<dbReference type="InterPro" id="IPR036146">
    <property type="entry name" value="Cyclotide_sf"/>
</dbReference>
<dbReference type="Pfam" id="PF03784">
    <property type="entry name" value="Cyclotide"/>
    <property type="match status" value="1"/>
</dbReference>
<dbReference type="PIRSF" id="PIRSF037891">
    <property type="entry name" value="Cycloviolacin"/>
    <property type="match status" value="1"/>
</dbReference>
<dbReference type="SUPFAM" id="SSF57038">
    <property type="entry name" value="Cyclotides"/>
    <property type="match status" value="1"/>
</dbReference>
<dbReference type="PROSITE" id="PS51052">
    <property type="entry name" value="CYCLOTIDE"/>
    <property type="match status" value="1"/>
</dbReference>
<dbReference type="PROSITE" id="PS60008">
    <property type="entry name" value="CYCLOTIDE_BRACELET"/>
    <property type="match status" value="1"/>
</dbReference>